<evidence type="ECO:0000255" key="1">
    <source>
        <dbReference type="PROSITE-ProRule" id="PRU00541"/>
    </source>
</evidence>
<evidence type="ECO:0000255" key="2">
    <source>
        <dbReference type="PROSITE-ProRule" id="PRU00542"/>
    </source>
</evidence>
<evidence type="ECO:0000256" key="3">
    <source>
        <dbReference type="SAM" id="MobiDB-lite"/>
    </source>
</evidence>
<evidence type="ECO:0000269" key="4">
    <source>
    </source>
</evidence>
<evidence type="ECO:0000269" key="5">
    <source>
    </source>
</evidence>
<evidence type="ECO:0000269" key="6">
    <source>
    </source>
</evidence>
<evidence type="ECO:0000269" key="7">
    <source>
    </source>
</evidence>
<evidence type="ECO:0000305" key="8"/>
<evidence type="ECO:0007829" key="9">
    <source>
        <dbReference type="PDB" id="7XWY"/>
    </source>
</evidence>
<feature type="chain" id="PRO_0000074383" description="ATP-dependent helicase fft3">
    <location>
        <begin position="1"/>
        <end position="922"/>
    </location>
</feature>
<feature type="domain" description="Helicase ATP-binding" evidence="1">
    <location>
        <begin position="399"/>
        <end position="567"/>
    </location>
</feature>
<feature type="domain" description="Helicase C-terminal" evidence="2">
    <location>
        <begin position="765"/>
        <end position="922"/>
    </location>
</feature>
<feature type="region of interest" description="Disordered" evidence="3">
    <location>
        <begin position="139"/>
        <end position="177"/>
    </location>
</feature>
<feature type="region of interest" description="Disordered" evidence="3">
    <location>
        <begin position="198"/>
        <end position="224"/>
    </location>
</feature>
<feature type="short sequence motif" description="DEGH box">
    <location>
        <begin position="518"/>
        <end position="521"/>
    </location>
</feature>
<feature type="compositionally biased region" description="Low complexity" evidence="3">
    <location>
        <begin position="153"/>
        <end position="166"/>
    </location>
</feature>
<feature type="compositionally biased region" description="Acidic residues" evidence="3">
    <location>
        <begin position="207"/>
        <end position="223"/>
    </location>
</feature>
<feature type="binding site" evidence="1">
    <location>
        <begin position="412"/>
        <end position="419"/>
    </location>
    <ligand>
        <name>ATP</name>
        <dbReference type="ChEBI" id="CHEBI:30616"/>
    </ligand>
</feature>
<feature type="modified residue" description="Phosphoserine" evidence="5">
    <location>
        <position position="213"/>
    </location>
</feature>
<feature type="modified residue" description="Phosphoserine" evidence="5">
    <location>
        <position position="219"/>
    </location>
</feature>
<feature type="modified residue" description="Phosphoserine" evidence="5">
    <location>
        <position position="617"/>
    </location>
</feature>
<feature type="helix" evidence="9">
    <location>
        <begin position="234"/>
        <end position="247"/>
    </location>
</feature>
<feature type="helix" evidence="9">
    <location>
        <begin position="250"/>
        <end position="257"/>
    </location>
</feature>
<feature type="helix" evidence="9">
    <location>
        <begin position="261"/>
        <end position="269"/>
    </location>
</feature>
<feature type="helix" evidence="9">
    <location>
        <begin position="276"/>
        <end position="280"/>
    </location>
</feature>
<feature type="helix" evidence="9">
    <location>
        <begin position="302"/>
        <end position="341"/>
    </location>
</feature>
<feature type="helix" evidence="9">
    <location>
        <begin position="349"/>
        <end position="351"/>
    </location>
</feature>
<feature type="strand" evidence="9">
    <location>
        <begin position="352"/>
        <end position="354"/>
    </location>
</feature>
<feature type="helix" evidence="9">
    <location>
        <begin position="360"/>
        <end position="365"/>
    </location>
</feature>
<feature type="helix" evidence="9">
    <location>
        <begin position="389"/>
        <end position="403"/>
    </location>
</feature>
<feature type="strand" evidence="9">
    <location>
        <begin position="407"/>
        <end position="410"/>
    </location>
</feature>
<feature type="helix" evidence="9">
    <location>
        <begin position="418"/>
        <end position="431"/>
    </location>
</feature>
<feature type="strand" evidence="9">
    <location>
        <begin position="438"/>
        <end position="442"/>
    </location>
</feature>
<feature type="helix" evidence="9">
    <location>
        <begin position="444"/>
        <end position="446"/>
    </location>
</feature>
<feature type="helix" evidence="9">
    <location>
        <begin position="447"/>
        <end position="457"/>
    </location>
</feature>
<feature type="strand" evidence="9">
    <location>
        <begin position="463"/>
        <end position="465"/>
    </location>
</feature>
<feature type="helix" evidence="9">
    <location>
        <begin position="470"/>
        <end position="481"/>
    </location>
</feature>
<feature type="strand" evidence="9">
    <location>
        <begin position="488"/>
        <end position="493"/>
    </location>
</feature>
<feature type="helix" evidence="9">
    <location>
        <begin position="494"/>
        <end position="498"/>
    </location>
</feature>
<feature type="helix" evidence="9">
    <location>
        <begin position="501"/>
        <end position="510"/>
    </location>
</feature>
<feature type="strand" evidence="9">
    <location>
        <begin position="512"/>
        <end position="518"/>
    </location>
</feature>
<feature type="helix" evidence="9">
    <location>
        <begin position="521"/>
        <end position="524"/>
    </location>
</feature>
<feature type="strand" evidence="9">
    <location>
        <begin position="526"/>
        <end position="528"/>
    </location>
</feature>
<feature type="helix" evidence="9">
    <location>
        <begin position="529"/>
        <end position="536"/>
    </location>
</feature>
<feature type="strand" evidence="9">
    <location>
        <begin position="539"/>
        <end position="545"/>
    </location>
</feature>
<feature type="helix" evidence="9">
    <location>
        <begin position="554"/>
        <end position="564"/>
    </location>
</feature>
<feature type="helix" evidence="9">
    <location>
        <begin position="574"/>
        <end position="576"/>
    </location>
</feature>
<feature type="helix" evidence="9">
    <location>
        <begin position="577"/>
        <end position="581"/>
    </location>
</feature>
<feature type="helix" evidence="9">
    <location>
        <begin position="590"/>
        <end position="592"/>
    </location>
</feature>
<feature type="helix" evidence="9">
    <location>
        <begin position="594"/>
        <end position="607"/>
    </location>
</feature>
<feature type="helix" evidence="9">
    <location>
        <begin position="608"/>
        <end position="610"/>
    </location>
</feature>
<feature type="helix" evidence="9">
    <location>
        <begin position="616"/>
        <end position="619"/>
    </location>
</feature>
<gene>
    <name type="primary">fft3</name>
    <name type="synonym">snf2SR</name>
    <name type="ORF">SPAC25A8.01c</name>
</gene>
<comment type="function">
    <text evidence="4 6 7">DNA helicase that possesses intrinsic ATP-dependent nucleosome-remodeling activity and is required for heterochromatin organization. Required for maintaining a heterochromatin chromatin structure at centromeres and subtelomeres by protecting these regions from euchromatin assembly. Enhances the nucleotide exchange activity of the pim1 guanine nucleotide exchange factor and abolishes histone-H3-mediated RanGAP inhibition. Involved in the construction of the centromeres.</text>
</comment>
<comment type="catalytic activity">
    <reaction>
        <text>ATP + H2O = ADP + phosphate + H(+)</text>
        <dbReference type="Rhea" id="RHEA:13065"/>
        <dbReference type="ChEBI" id="CHEBI:15377"/>
        <dbReference type="ChEBI" id="CHEBI:15378"/>
        <dbReference type="ChEBI" id="CHEBI:30616"/>
        <dbReference type="ChEBI" id="CHEBI:43474"/>
        <dbReference type="ChEBI" id="CHEBI:456216"/>
        <dbReference type="EC" id="3.6.4.12"/>
    </reaction>
</comment>
<comment type="subunit">
    <text evidence="6">interacts with the GDP-bound form of spi1.</text>
</comment>
<comment type="subcellular location">
    <subcellularLocation>
        <location>Nucleus</location>
    </subcellularLocation>
    <subcellularLocation>
        <location>Chromosome</location>
    </subcellularLocation>
</comment>
<comment type="similarity">
    <text evidence="8">Belongs to the SNF2/RAD54 helicase family.</text>
</comment>
<accession>O42861</accession>
<accession>Q9US92</accession>
<organism>
    <name type="scientific">Schizosaccharomyces pombe (strain 972 / ATCC 24843)</name>
    <name type="common">Fission yeast</name>
    <dbReference type="NCBI Taxonomy" id="284812"/>
    <lineage>
        <taxon>Eukaryota</taxon>
        <taxon>Fungi</taxon>
        <taxon>Dikarya</taxon>
        <taxon>Ascomycota</taxon>
        <taxon>Taphrinomycotina</taxon>
        <taxon>Schizosaccharomycetes</taxon>
        <taxon>Schizosaccharomycetales</taxon>
        <taxon>Schizosaccharomycetaceae</taxon>
        <taxon>Schizosaccharomyces</taxon>
    </lineage>
</organism>
<reference key="1">
    <citation type="journal article" date="2002" name="Nature">
        <title>The genome sequence of Schizosaccharomyces pombe.</title>
        <authorList>
            <person name="Wood V."/>
            <person name="Gwilliam R."/>
            <person name="Rajandream M.A."/>
            <person name="Lyne M.H."/>
            <person name="Lyne R."/>
            <person name="Stewart A."/>
            <person name="Sgouros J.G."/>
            <person name="Peat N."/>
            <person name="Hayles J."/>
            <person name="Baker S.G."/>
            <person name="Basham D."/>
            <person name="Bowman S."/>
            <person name="Brooks K."/>
            <person name="Brown D."/>
            <person name="Brown S."/>
            <person name="Chillingworth T."/>
            <person name="Churcher C.M."/>
            <person name="Collins M."/>
            <person name="Connor R."/>
            <person name="Cronin A."/>
            <person name="Davis P."/>
            <person name="Feltwell T."/>
            <person name="Fraser A."/>
            <person name="Gentles S."/>
            <person name="Goble A."/>
            <person name="Hamlin N."/>
            <person name="Harris D.E."/>
            <person name="Hidalgo J."/>
            <person name="Hodgson G."/>
            <person name="Holroyd S."/>
            <person name="Hornsby T."/>
            <person name="Howarth S."/>
            <person name="Huckle E.J."/>
            <person name="Hunt S."/>
            <person name="Jagels K."/>
            <person name="James K.D."/>
            <person name="Jones L."/>
            <person name="Jones M."/>
            <person name="Leather S."/>
            <person name="McDonald S."/>
            <person name="McLean J."/>
            <person name="Mooney P."/>
            <person name="Moule S."/>
            <person name="Mungall K.L."/>
            <person name="Murphy L.D."/>
            <person name="Niblett D."/>
            <person name="Odell C."/>
            <person name="Oliver K."/>
            <person name="O'Neil S."/>
            <person name="Pearson D."/>
            <person name="Quail M.A."/>
            <person name="Rabbinowitsch E."/>
            <person name="Rutherford K.M."/>
            <person name="Rutter S."/>
            <person name="Saunders D."/>
            <person name="Seeger K."/>
            <person name="Sharp S."/>
            <person name="Skelton J."/>
            <person name="Simmonds M.N."/>
            <person name="Squares R."/>
            <person name="Squares S."/>
            <person name="Stevens K."/>
            <person name="Taylor K."/>
            <person name="Taylor R.G."/>
            <person name="Tivey A."/>
            <person name="Walsh S.V."/>
            <person name="Warren T."/>
            <person name="Whitehead S."/>
            <person name="Woodward J.R."/>
            <person name="Volckaert G."/>
            <person name="Aert R."/>
            <person name="Robben J."/>
            <person name="Grymonprez B."/>
            <person name="Weltjens I."/>
            <person name="Vanstreels E."/>
            <person name="Rieger M."/>
            <person name="Schaefer M."/>
            <person name="Mueller-Auer S."/>
            <person name="Gabel C."/>
            <person name="Fuchs M."/>
            <person name="Duesterhoeft A."/>
            <person name="Fritzc C."/>
            <person name="Holzer E."/>
            <person name="Moestl D."/>
            <person name="Hilbert H."/>
            <person name="Borzym K."/>
            <person name="Langer I."/>
            <person name="Beck A."/>
            <person name="Lehrach H."/>
            <person name="Reinhardt R."/>
            <person name="Pohl T.M."/>
            <person name="Eger P."/>
            <person name="Zimmermann W."/>
            <person name="Wedler H."/>
            <person name="Wambutt R."/>
            <person name="Purnelle B."/>
            <person name="Goffeau A."/>
            <person name="Cadieu E."/>
            <person name="Dreano S."/>
            <person name="Gloux S."/>
            <person name="Lelaure V."/>
            <person name="Mottier S."/>
            <person name="Galibert F."/>
            <person name="Aves S.J."/>
            <person name="Xiang Z."/>
            <person name="Hunt C."/>
            <person name="Moore K."/>
            <person name="Hurst S.M."/>
            <person name="Lucas M."/>
            <person name="Rochet M."/>
            <person name="Gaillardin C."/>
            <person name="Tallada V.A."/>
            <person name="Garzon A."/>
            <person name="Thode G."/>
            <person name="Daga R.R."/>
            <person name="Cruzado L."/>
            <person name="Jimenez J."/>
            <person name="Sanchez M."/>
            <person name="del Rey F."/>
            <person name="Benito J."/>
            <person name="Dominguez A."/>
            <person name="Revuelta J.L."/>
            <person name="Moreno S."/>
            <person name="Armstrong J."/>
            <person name="Forsburg S.L."/>
            <person name="Cerutti L."/>
            <person name="Lowe T."/>
            <person name="McCombie W.R."/>
            <person name="Paulsen I."/>
            <person name="Potashkin J."/>
            <person name="Shpakovski G.V."/>
            <person name="Ussery D."/>
            <person name="Barrell B.G."/>
            <person name="Nurse P."/>
        </authorList>
    </citation>
    <scope>NUCLEOTIDE SEQUENCE [LARGE SCALE GENOMIC DNA]</scope>
    <source>
        <strain>972 / ATCC 24843</strain>
    </source>
</reference>
<reference key="2">
    <citation type="journal article" date="2000" name="Genes Cells">
        <title>Large-scale screening of intracellular protein localization in living fission yeast cells by the use of a GFP-fusion genomic DNA library.</title>
        <authorList>
            <person name="Ding D.-Q."/>
            <person name="Tomita Y."/>
            <person name="Yamamoto A."/>
            <person name="Chikashige Y."/>
            <person name="Haraguchi T."/>
            <person name="Hiraoka Y."/>
        </authorList>
    </citation>
    <scope>NUCLEOTIDE SEQUENCE [LARGE SCALE GENOMIC DNA] OF 51-226</scope>
    <scope>SUBCELLULAR LOCATION</scope>
    <source>
        <strain>ATCC 38364 / 968</strain>
    </source>
</reference>
<reference key="3">
    <citation type="journal article" date="2004" name="Mol. Biol. Cell">
        <title>Schizosaccharomyces pombe RanGAP homolog, SpRna1, is required for centromeric silencing and chromosome segregation.</title>
        <authorList>
            <person name="Kusano A."/>
            <person name="Yoshioka T."/>
            <person name="Nishijima H."/>
            <person name="Nishitani H."/>
            <person name="Nishimoto T."/>
        </authorList>
    </citation>
    <scope>FUNCTION</scope>
</reference>
<reference key="4">
    <citation type="journal article" date="2006" name="Nat. Biotechnol.">
        <title>ORFeome cloning and global analysis of protein localization in the fission yeast Schizosaccharomyces pombe.</title>
        <authorList>
            <person name="Matsuyama A."/>
            <person name="Arai R."/>
            <person name="Yashiroda Y."/>
            <person name="Shirai A."/>
            <person name="Kamata A."/>
            <person name="Sekido S."/>
            <person name="Kobayashi Y."/>
            <person name="Hashimoto A."/>
            <person name="Hamamoto M."/>
            <person name="Hiraoka Y."/>
            <person name="Horinouchi S."/>
            <person name="Yoshida M."/>
        </authorList>
    </citation>
    <scope>SUBCELLULAR LOCATION [LARGE SCALE ANALYSIS]</scope>
</reference>
<reference key="5">
    <citation type="journal article" date="2008" name="Genes Cells">
        <title>Schizosaccharomyces pombe Snf2SR, a novel SNF2 family protein, interacts with Ran GTPase and modulates both RanGEF and RanGAP activities.</title>
        <authorList>
            <person name="Ohba T."/>
            <person name="Nishijima H."/>
            <person name="Nishitani H."/>
            <person name="Nishimoto T."/>
        </authorList>
    </citation>
    <scope>SUBCELLULAR LOCATION</scope>
    <scope>FUNCTION</scope>
    <scope>INTERACTION WITH SPI1</scope>
</reference>
<reference key="6">
    <citation type="journal article" date="2008" name="J. Proteome Res.">
        <title>Phosphoproteome analysis of fission yeast.</title>
        <authorList>
            <person name="Wilson-Grady J.T."/>
            <person name="Villen J."/>
            <person name="Gygi S.P."/>
        </authorList>
    </citation>
    <scope>PHOSPHORYLATION [LARGE SCALE ANALYSIS] AT SER-213; SER-219 AND SER-617</scope>
    <scope>IDENTIFICATION BY MASS SPECTROMETRY</scope>
</reference>
<reference key="7">
    <citation type="journal article" date="2011" name="PLoS Genet.">
        <title>The FUN30 chromatin remodeler, Fft3, protects centromeric and subtelomeric domains from euchromatin formation.</title>
        <authorList>
            <person name="Stralfors A."/>
            <person name="Walfridsson J."/>
            <person name="Bhuiyan H."/>
            <person name="Ekwall K."/>
        </authorList>
    </citation>
    <scope>FUNCTION</scope>
</reference>
<proteinExistence type="evidence at protein level"/>
<keyword id="KW-0002">3D-structure</keyword>
<keyword id="KW-0067">ATP-binding</keyword>
<keyword id="KW-0156">Chromatin regulator</keyword>
<keyword id="KW-0158">Chromosome</keyword>
<keyword id="KW-0238">DNA-binding</keyword>
<keyword id="KW-0347">Helicase</keyword>
<keyword id="KW-0378">Hydrolase</keyword>
<keyword id="KW-0547">Nucleotide-binding</keyword>
<keyword id="KW-0539">Nucleus</keyword>
<keyword id="KW-0597">Phosphoprotein</keyword>
<keyword id="KW-1185">Reference proteome</keyword>
<dbReference type="EC" id="3.6.4.12"/>
<dbReference type="EMBL" id="CU329670">
    <property type="protein sequence ID" value="CAA16951.1"/>
    <property type="molecule type" value="Genomic_DNA"/>
</dbReference>
<dbReference type="EMBL" id="AB027947">
    <property type="protein sequence ID" value="BAA87251.1"/>
    <property type="molecule type" value="Genomic_DNA"/>
</dbReference>
<dbReference type="PIR" id="T38371">
    <property type="entry name" value="T38371"/>
</dbReference>
<dbReference type="RefSeq" id="NP_593617.1">
    <property type="nucleotide sequence ID" value="NM_001019048.2"/>
</dbReference>
<dbReference type="PDB" id="7XWY">
    <property type="method" value="X-ray"/>
    <property type="resolution" value="2.25 A"/>
    <property type="chains" value="A=232-620"/>
</dbReference>
<dbReference type="PDB" id="7XXE">
    <property type="method" value="X-ray"/>
    <property type="resolution" value="4.20 A"/>
    <property type="chains" value="A/B=626-903"/>
</dbReference>
<dbReference type="PDB" id="7XYF">
    <property type="method" value="EM"/>
    <property type="resolution" value="4.30 A"/>
    <property type="chains" value="K=232-903"/>
</dbReference>
<dbReference type="PDB" id="7XYG">
    <property type="method" value="EM"/>
    <property type="resolution" value="5.40 A"/>
    <property type="chains" value="K=1-922"/>
</dbReference>
<dbReference type="PDBsum" id="7XWY"/>
<dbReference type="PDBsum" id="7XXE"/>
<dbReference type="PDBsum" id="7XYF"/>
<dbReference type="PDBsum" id="7XYG"/>
<dbReference type="EMDB" id="EMD-33520"/>
<dbReference type="EMDB" id="EMD-33521"/>
<dbReference type="SMR" id="O42861"/>
<dbReference type="BioGRID" id="278031">
    <property type="interactions" value="1191"/>
</dbReference>
<dbReference type="FunCoup" id="O42861">
    <property type="interactions" value="1106"/>
</dbReference>
<dbReference type="STRING" id="284812.O42861"/>
<dbReference type="iPTMnet" id="O42861"/>
<dbReference type="PaxDb" id="4896-SPAC25A8.01c.1"/>
<dbReference type="EnsemblFungi" id="SPAC25A8.01c.1">
    <property type="protein sequence ID" value="SPAC25A8.01c.1:pep"/>
    <property type="gene ID" value="SPAC25A8.01c"/>
</dbReference>
<dbReference type="GeneID" id="2541531"/>
<dbReference type="KEGG" id="spo:2541531"/>
<dbReference type="PomBase" id="SPAC25A8.01c">
    <property type="gene designation" value="fft3"/>
</dbReference>
<dbReference type="VEuPathDB" id="FungiDB:SPAC25A8.01c"/>
<dbReference type="eggNOG" id="KOG0389">
    <property type="taxonomic scope" value="Eukaryota"/>
</dbReference>
<dbReference type="HOGENOM" id="CLU_000315_16_3_1"/>
<dbReference type="InParanoid" id="O42861"/>
<dbReference type="OMA" id="MMLDVVE"/>
<dbReference type="PhylomeDB" id="O42861"/>
<dbReference type="PRO" id="PR:O42861"/>
<dbReference type="Proteomes" id="UP000002485">
    <property type="component" value="Chromosome I"/>
</dbReference>
<dbReference type="GO" id="GO:0000785">
    <property type="term" value="C:chromatin"/>
    <property type="evidence" value="ECO:0000314"/>
    <property type="project" value="PomBase"/>
</dbReference>
<dbReference type="GO" id="GO:0000792">
    <property type="term" value="C:heterochromatin"/>
    <property type="evidence" value="ECO:0000314"/>
    <property type="project" value="PomBase"/>
</dbReference>
<dbReference type="GO" id="GO:0005634">
    <property type="term" value="C:nucleus"/>
    <property type="evidence" value="ECO:0000314"/>
    <property type="project" value="PomBase"/>
</dbReference>
<dbReference type="GO" id="GO:0005524">
    <property type="term" value="F:ATP binding"/>
    <property type="evidence" value="ECO:0000255"/>
    <property type="project" value="PomBase"/>
</dbReference>
<dbReference type="GO" id="GO:0016887">
    <property type="term" value="F:ATP hydrolysis activity"/>
    <property type="evidence" value="ECO:0007669"/>
    <property type="project" value="RHEA"/>
</dbReference>
<dbReference type="GO" id="GO:0140665">
    <property type="term" value="F:ATP-dependent H3-H4 histone complex chaperone activity"/>
    <property type="evidence" value="ECO:0000269"/>
    <property type="project" value="PomBase"/>
</dbReference>
<dbReference type="GO" id="GO:0003682">
    <property type="term" value="F:chromatin binding"/>
    <property type="evidence" value="ECO:0000318"/>
    <property type="project" value="GO_Central"/>
</dbReference>
<dbReference type="GO" id="GO:0003684">
    <property type="term" value="F:damaged DNA binding"/>
    <property type="evidence" value="ECO:0000269"/>
    <property type="project" value="PomBase"/>
</dbReference>
<dbReference type="GO" id="GO:0003677">
    <property type="term" value="F:DNA binding"/>
    <property type="evidence" value="ECO:0000318"/>
    <property type="project" value="GO_Central"/>
</dbReference>
<dbReference type="GO" id="GO:0004386">
    <property type="term" value="F:helicase activity"/>
    <property type="evidence" value="ECO:0007669"/>
    <property type="project" value="UniProtKB-KW"/>
</dbReference>
<dbReference type="GO" id="GO:0140713">
    <property type="term" value="F:histone chaperone activity"/>
    <property type="evidence" value="ECO:0000316"/>
    <property type="project" value="PomBase"/>
</dbReference>
<dbReference type="GO" id="GO:0140750">
    <property type="term" value="F:nucleosome array spacer activity"/>
    <property type="evidence" value="ECO:0000318"/>
    <property type="project" value="GO_Central"/>
</dbReference>
<dbReference type="GO" id="GO:0140698">
    <property type="term" value="P:attachment of telomeric heterochromatin to nuclear envelope"/>
    <property type="evidence" value="ECO:0000315"/>
    <property type="project" value="PomBase"/>
</dbReference>
<dbReference type="GO" id="GO:0006338">
    <property type="term" value="P:chromatin remodeling"/>
    <property type="evidence" value="ECO:0000315"/>
    <property type="project" value="PomBase"/>
</dbReference>
<dbReference type="GO" id="GO:0000729">
    <property type="term" value="P:DNA double-strand break processing"/>
    <property type="evidence" value="ECO:0000318"/>
    <property type="project" value="GO_Central"/>
</dbReference>
<dbReference type="GO" id="GO:0140861">
    <property type="term" value="P:DNA repair-dependent chromatin remodeling"/>
    <property type="evidence" value="ECO:0000269"/>
    <property type="project" value="PomBase"/>
</dbReference>
<dbReference type="GO" id="GO:0045944">
    <property type="term" value="P:positive regulation of transcription by RNA polymerase II"/>
    <property type="evidence" value="ECO:0000318"/>
    <property type="project" value="GO_Central"/>
</dbReference>
<dbReference type="GO" id="GO:0031297">
    <property type="term" value="P:replication fork processing"/>
    <property type="evidence" value="ECO:0000269"/>
    <property type="project" value="PomBase"/>
</dbReference>
<dbReference type="GO" id="GO:0140673">
    <property type="term" value="P:transcription elongation-coupled chromatin remodeling"/>
    <property type="evidence" value="ECO:0000315"/>
    <property type="project" value="PomBase"/>
</dbReference>
<dbReference type="CDD" id="cd17998">
    <property type="entry name" value="DEXHc_SMARCAD1"/>
    <property type="match status" value="1"/>
</dbReference>
<dbReference type="CDD" id="cd18793">
    <property type="entry name" value="SF2_C_SNF"/>
    <property type="match status" value="1"/>
</dbReference>
<dbReference type="FunFam" id="3.40.50.10810:FF:000014">
    <property type="entry name" value="SWI/SNF-related matrix-associated actin-dependent regulator of chromatin subfamily A containing DEAD/H box 1"/>
    <property type="match status" value="1"/>
</dbReference>
<dbReference type="Gene3D" id="3.40.50.300">
    <property type="entry name" value="P-loop containing nucleotide triphosphate hydrolases"/>
    <property type="match status" value="1"/>
</dbReference>
<dbReference type="Gene3D" id="3.40.50.10810">
    <property type="entry name" value="Tandem AAA-ATPase domain"/>
    <property type="match status" value="1"/>
</dbReference>
<dbReference type="InterPro" id="IPR014001">
    <property type="entry name" value="Helicase_ATP-bd"/>
</dbReference>
<dbReference type="InterPro" id="IPR001650">
    <property type="entry name" value="Helicase_C-like"/>
</dbReference>
<dbReference type="InterPro" id="IPR027417">
    <property type="entry name" value="P-loop_NTPase"/>
</dbReference>
<dbReference type="InterPro" id="IPR038718">
    <property type="entry name" value="SNF2-like_sf"/>
</dbReference>
<dbReference type="InterPro" id="IPR049730">
    <property type="entry name" value="SNF2/RAD54-like_C"/>
</dbReference>
<dbReference type="InterPro" id="IPR000330">
    <property type="entry name" value="SNF2_N"/>
</dbReference>
<dbReference type="PANTHER" id="PTHR10799">
    <property type="entry name" value="SNF2/RAD54 HELICASE FAMILY"/>
    <property type="match status" value="1"/>
</dbReference>
<dbReference type="Pfam" id="PF00271">
    <property type="entry name" value="Helicase_C"/>
    <property type="match status" value="1"/>
</dbReference>
<dbReference type="Pfam" id="PF00176">
    <property type="entry name" value="SNF2-rel_dom"/>
    <property type="match status" value="1"/>
</dbReference>
<dbReference type="SMART" id="SM00487">
    <property type="entry name" value="DEXDc"/>
    <property type="match status" value="1"/>
</dbReference>
<dbReference type="SMART" id="SM00490">
    <property type="entry name" value="HELICc"/>
    <property type="match status" value="1"/>
</dbReference>
<dbReference type="SUPFAM" id="SSF52540">
    <property type="entry name" value="P-loop containing nucleoside triphosphate hydrolases"/>
    <property type="match status" value="2"/>
</dbReference>
<dbReference type="PROSITE" id="PS51192">
    <property type="entry name" value="HELICASE_ATP_BIND_1"/>
    <property type="match status" value="1"/>
</dbReference>
<dbReference type="PROSITE" id="PS51194">
    <property type="entry name" value="HELICASE_CTER"/>
    <property type="match status" value="1"/>
</dbReference>
<protein>
    <recommendedName>
        <fullName>ATP-dependent helicase fft3</fullName>
        <ecNumber>3.6.4.12</ecNumber>
    </recommendedName>
    <alternativeName>
        <fullName>Fun thirty-related protein 3</fullName>
    </alternativeName>
</protein>
<name>FFT3_SCHPO</name>
<sequence>MDGKRKIEHTADGTHYDATSNVKRKPIFPPFIADSLSEATEKANVMGGGMNSRLQILSEMSKRVQATAPISSLEHFKQLSDISPSFTSSANSINQPYNYSGSLENLVPTPSAGTPSQFMDAQNPYGAVYNALSQFSETEPKMPSYMDDEEASDSLPLSLSSQSLSSQVTNQKPAPHRLTMRERYAANNLTNGLQFTLPLSSRKTYEPEADDDSNDDMYSDDDSNADRWASRIDTAALKEEVLKYMNRCSTQDLADMTGCTLAEAEFMVAKRPFPDLESALVVKQPRPVIPKGRRGRREKTPLGPRLVGICMEIMRGYFVVDALIRQCEQLGGKIQRGIEAWGLSNTATSDEGETSLVNFDQMKSFGTPANSSFITTPPASFSPDIKLQDYQIIGINWLYLLYELKLAGILADEMGLGKTCQTIAFFSLLMDKNINGPHLVIAPASTMENWLREFAKFCPKLKIELYYGSQVEREEIRERINSNKDSYNVMLTTYRLAATSKADRLFLRNQKFNVCVYDEGHYLKNRASERYRHLMSIPADFRVLLTGTPLQNNLKELISLLAFILPHVFDYGLKSLDVIFTMKKSPESDFERALLSEQRVSRAKMMMAPFVLRRKKSQVLDALPKKTRIIEFCEFSEEERRRYDDFASKQSVNSLLDENVMKTNLDTNANLAKKKSTAGFVLVQLRKLADHPMLFRIHYKDDILRQMAKAIMNEPQYKKANELYIFEDMQYMSDIELHNLCCKFPSINSFQLKDEPWMDATKVRKLKKLLTNAVENGDRVVLFSQFTQVLDILQLVMKSLNLKFLRFDGSTQVDFRQDLIDQFYADESINVFLLSTKAGGFGINLACANMVILYDVSFNPFDDLQAEDRAHRVGQKKEVTVYKFVVKDTIEEHIQRLANAKIALDATLSGNAETVEAEDDDD</sequence>